<reference key="1">
    <citation type="submission" date="2004-11" db="EMBL/GenBank/DDBJ databases">
        <title>Complete genome sequence of Thermus thermophilus HB8.</title>
        <authorList>
            <person name="Masui R."/>
            <person name="Kurokawa K."/>
            <person name="Nakagawa N."/>
            <person name="Tokunaga F."/>
            <person name="Koyama Y."/>
            <person name="Shibata T."/>
            <person name="Oshima T."/>
            <person name="Yokoyama S."/>
            <person name="Yasunaga T."/>
            <person name="Kuramitsu S."/>
        </authorList>
    </citation>
    <scope>NUCLEOTIDE SEQUENCE [LARGE SCALE GENOMIC DNA]</scope>
    <source>
        <strain>ATCC 27634 / DSM 579 / HB8</strain>
    </source>
</reference>
<reference key="2">
    <citation type="journal article" date="2011" name="Nature">
        <title>Structure and function of a membrane component SecDF that enhances protein export.</title>
        <authorList>
            <person name="Tsukazaki T."/>
            <person name="Mori H."/>
            <person name="Echizen Y."/>
            <person name="Ishitani R."/>
            <person name="Fukai S."/>
            <person name="Tanaka T."/>
            <person name="Perederina A."/>
            <person name="Vassylyev D.G."/>
            <person name="Kohno T."/>
            <person name="Maturana A.D."/>
            <person name="Ito K."/>
            <person name="Nureki O."/>
        </authorList>
    </citation>
    <scope>X-RAY CRYSTALLOGRAPHY (3.3 ANGSTROMS)</scope>
    <scope>SUBUNIT</scope>
    <scope>UTILIZATION OF PMF</scope>
    <scope>MUTAGENESIS OF ASP-340; ASP-637 AND ARG-671</scope>
    <source>
        <strain>ATCC 27634 / DSM 579 / HB8</strain>
    </source>
</reference>
<accession>Q5SKE6</accession>
<evidence type="ECO:0000250" key="1"/>
<evidence type="ECO:0000269" key="2">
    <source>
    </source>
</evidence>
<evidence type="ECO:0000305" key="3"/>
<evidence type="ECO:0007829" key="4">
    <source>
        <dbReference type="PDB" id="3AQO"/>
    </source>
</evidence>
<evidence type="ECO:0007829" key="5">
    <source>
        <dbReference type="PDB" id="3AQP"/>
    </source>
</evidence>
<evidence type="ECO:0007829" key="6">
    <source>
        <dbReference type="PDB" id="5YHF"/>
    </source>
</evidence>
<organism>
    <name type="scientific">Thermus thermophilus (strain ATCC 27634 / DSM 579 / HB8)</name>
    <dbReference type="NCBI Taxonomy" id="300852"/>
    <lineage>
        <taxon>Bacteria</taxon>
        <taxon>Thermotogati</taxon>
        <taxon>Deinococcota</taxon>
        <taxon>Deinococci</taxon>
        <taxon>Thermales</taxon>
        <taxon>Thermaceae</taxon>
        <taxon>Thermus</taxon>
    </lineage>
</organism>
<proteinExistence type="evidence at protein level"/>
<gene>
    <name type="primary">secDF</name>
    <name type="ordered locus">TTHA0697</name>
</gene>
<keyword id="KW-0002">3D-structure</keyword>
<keyword id="KW-0997">Cell inner membrane</keyword>
<keyword id="KW-1003">Cell membrane</keyword>
<keyword id="KW-0472">Membrane</keyword>
<keyword id="KW-0653">Protein transport</keyword>
<keyword id="KW-1185">Reference proteome</keyword>
<keyword id="KW-0811">Translocation</keyword>
<keyword id="KW-0812">Transmembrane</keyword>
<keyword id="KW-1133">Transmembrane helix</keyword>
<keyword id="KW-0813">Transport</keyword>
<sequence>MNRKNLTSLFLLGVFLLALLFVWKPWAPEEPKVRLGLDLKGGLRIVLEADVENPTLDDLEKARTVLENRINALGVAEPLIQIQGQKRIVVELPGLSQADQDRALKLIGQRAVLEFRIVKEGATGTTVAQINQALRENPRLNREELEKDLIKPEDLGPPLLTGADLADARAVFDQFGRPQVSLTFTPEGAKKFEEVTRQNIGKRLAIVLDGRVYTAPVIRQAITGGQAVIEGLSSVEEASEIALVLRSGSLPVPLKVAEIRAIGPTLGQDAIQAGIRSALIGTLAIFLLIFAYYGPHLGLVASLGLLYTSALILGLLSGLGATLTLPGIAGLVLTLGAAVDGNVLSFERIKEELRAGKKLRQAIPEGFRHSTLTIMDVNIAHLLAAAALYQYATGPVRGFAVILAIGVVASVFSNLVFSRHLLERLADRGEIRPPMWLVDPRFNFMGPARYVTAATLLLAALAAGVVFAKGFNYSIDFTGGTAYTLRAEPNVEVETLRRFLEEKGFPGKEAVITQVQAPTAAYREFLVKLPPLSDERRLELERLFASELKATVLASETVGPAIGEELRRNAVMAVLVGLGLILLYVAFRFDWTFGVASILAVAHDVAIVAGMYSLLGLEFSIPTIAALLTIVGYSINDSIVVSDRIRENQKLLRHLPYAELVNRSINQTLSRTVMTSLTTLLPILALLFLGGSVLRDFALAIFVGIFVGTYSSIYVVSALVVAWKNRRKAQEASKA</sequence>
<protein>
    <recommendedName>
        <fullName>Protein translocase subunit SecDF</fullName>
    </recommendedName>
</protein>
<dbReference type="EMBL" id="AP008226">
    <property type="protein sequence ID" value="BAD70520.1"/>
    <property type="molecule type" value="Genomic_DNA"/>
</dbReference>
<dbReference type="RefSeq" id="YP_143963.1">
    <property type="nucleotide sequence ID" value="NC_006461.1"/>
</dbReference>
<dbReference type="PDB" id="2RRN">
    <property type="method" value="NMR"/>
    <property type="chains" value="A=470-559"/>
</dbReference>
<dbReference type="PDB" id="3AQO">
    <property type="method" value="X-ray"/>
    <property type="resolution" value="2.60 A"/>
    <property type="chains" value="A/B/C/D=35-263"/>
</dbReference>
<dbReference type="PDB" id="3AQP">
    <property type="method" value="X-ray"/>
    <property type="resolution" value="3.30 A"/>
    <property type="chains" value="A/B=1-735"/>
</dbReference>
<dbReference type="PDB" id="5YHF">
    <property type="method" value="X-ray"/>
    <property type="resolution" value="2.80 A"/>
    <property type="chains" value="A=1-735"/>
</dbReference>
<dbReference type="PDBsum" id="2RRN"/>
<dbReference type="PDBsum" id="3AQO"/>
<dbReference type="PDBsum" id="3AQP"/>
<dbReference type="PDBsum" id="5YHF"/>
<dbReference type="BMRB" id="Q5SKE6"/>
<dbReference type="SMR" id="Q5SKE6"/>
<dbReference type="TCDB" id="2.A.6.4.3">
    <property type="family name" value="the resistance-nodulation-cell division (rnd) superfamily"/>
</dbReference>
<dbReference type="EnsemblBacteria" id="BAD70520">
    <property type="protein sequence ID" value="BAD70520"/>
    <property type="gene ID" value="BAD70520"/>
</dbReference>
<dbReference type="GeneID" id="3168575"/>
<dbReference type="KEGG" id="ttj:TTHA0697"/>
<dbReference type="PATRIC" id="fig|300852.9.peg.691"/>
<dbReference type="eggNOG" id="COG0341">
    <property type="taxonomic scope" value="Bacteria"/>
</dbReference>
<dbReference type="eggNOG" id="COG0342">
    <property type="taxonomic scope" value="Bacteria"/>
</dbReference>
<dbReference type="HOGENOM" id="CLU_007894_3_2_0"/>
<dbReference type="PhylomeDB" id="Q5SKE6"/>
<dbReference type="EvolutionaryTrace" id="Q5SKE6"/>
<dbReference type="Proteomes" id="UP000000532">
    <property type="component" value="Chromosome"/>
</dbReference>
<dbReference type="GO" id="GO:0005886">
    <property type="term" value="C:plasma membrane"/>
    <property type="evidence" value="ECO:0007669"/>
    <property type="project" value="UniProtKB-SubCell"/>
</dbReference>
<dbReference type="GO" id="GO:0015450">
    <property type="term" value="F:protein-transporting ATPase activity"/>
    <property type="evidence" value="ECO:0007669"/>
    <property type="project" value="InterPro"/>
</dbReference>
<dbReference type="GO" id="GO:0065002">
    <property type="term" value="P:intracellular protein transmembrane transport"/>
    <property type="evidence" value="ECO:0007669"/>
    <property type="project" value="UniProtKB-UniRule"/>
</dbReference>
<dbReference type="GO" id="GO:0006605">
    <property type="term" value="P:protein targeting"/>
    <property type="evidence" value="ECO:0007669"/>
    <property type="project" value="UniProtKB-UniRule"/>
</dbReference>
<dbReference type="GO" id="GO:0043952">
    <property type="term" value="P:protein transport by the Sec complex"/>
    <property type="evidence" value="ECO:0007669"/>
    <property type="project" value="UniProtKB-UniRule"/>
</dbReference>
<dbReference type="FunFam" id="1.20.1640.10:FF:000024">
    <property type="entry name" value="Multifunctional fusion protein"/>
    <property type="match status" value="1"/>
</dbReference>
<dbReference type="Gene3D" id="3.30.1360.200">
    <property type="match status" value="1"/>
</dbReference>
<dbReference type="Gene3D" id="3.30.70.3220">
    <property type="match status" value="1"/>
</dbReference>
<dbReference type="Gene3D" id="3.30.70.3400">
    <property type="match status" value="1"/>
</dbReference>
<dbReference type="Gene3D" id="1.20.1640.10">
    <property type="entry name" value="Multidrug efflux transporter AcrB transmembrane domain"/>
    <property type="match status" value="2"/>
</dbReference>
<dbReference type="HAMAP" id="MF_01463_B">
    <property type="entry name" value="SecD_B"/>
    <property type="match status" value="1"/>
</dbReference>
<dbReference type="HAMAP" id="MF_01464_B">
    <property type="entry name" value="SecF_B"/>
    <property type="match status" value="1"/>
</dbReference>
<dbReference type="InterPro" id="IPR005791">
    <property type="entry name" value="SecD"/>
</dbReference>
<dbReference type="InterPro" id="IPR022813">
    <property type="entry name" value="SecD/SecF_arch_bac"/>
</dbReference>
<dbReference type="InterPro" id="IPR022645">
    <property type="entry name" value="SecD/SecF_bac"/>
</dbReference>
<dbReference type="InterPro" id="IPR022646">
    <property type="entry name" value="SecD/SecF_CS"/>
</dbReference>
<dbReference type="InterPro" id="IPR048631">
    <property type="entry name" value="SecD_1st"/>
</dbReference>
<dbReference type="InterPro" id="IPR048634">
    <property type="entry name" value="SecD_SecF_C"/>
</dbReference>
<dbReference type="InterPro" id="IPR055344">
    <property type="entry name" value="SecD_SecF_C_bact"/>
</dbReference>
<dbReference type="InterPro" id="IPR054384">
    <property type="entry name" value="SecDF_P1_head"/>
</dbReference>
<dbReference type="InterPro" id="IPR005665">
    <property type="entry name" value="SecF_bac"/>
</dbReference>
<dbReference type="InterPro" id="IPR000731">
    <property type="entry name" value="SSD"/>
</dbReference>
<dbReference type="NCBIfam" id="TIGR00916">
    <property type="entry name" value="2A0604s01"/>
    <property type="match status" value="2"/>
</dbReference>
<dbReference type="NCBIfam" id="NF009583">
    <property type="entry name" value="PRK13024.1-3"/>
    <property type="match status" value="1"/>
</dbReference>
<dbReference type="NCBIfam" id="TIGR01129">
    <property type="entry name" value="secD"/>
    <property type="match status" value="1"/>
</dbReference>
<dbReference type="NCBIfam" id="TIGR00966">
    <property type="entry name" value="transloc_SecF"/>
    <property type="match status" value="1"/>
</dbReference>
<dbReference type="PANTHER" id="PTHR30081:SF1">
    <property type="entry name" value="PROTEIN TRANSLOCASE SUBUNIT SECD"/>
    <property type="match status" value="1"/>
</dbReference>
<dbReference type="PANTHER" id="PTHR30081">
    <property type="entry name" value="PROTEIN-EXPORT MEMBRANE PROTEIN SEC"/>
    <property type="match status" value="1"/>
</dbReference>
<dbReference type="Pfam" id="PF07549">
    <property type="entry name" value="Sec_GG"/>
    <property type="match status" value="2"/>
</dbReference>
<dbReference type="Pfam" id="PF21760">
    <property type="entry name" value="SecD_1st"/>
    <property type="match status" value="1"/>
</dbReference>
<dbReference type="Pfam" id="PF02355">
    <property type="entry name" value="SecD_SecF_C"/>
    <property type="match status" value="2"/>
</dbReference>
<dbReference type="Pfam" id="PF22599">
    <property type="entry name" value="SecDF_P1_head"/>
    <property type="match status" value="1"/>
</dbReference>
<dbReference type="PRINTS" id="PR01755">
    <property type="entry name" value="SECFTRNLCASE"/>
</dbReference>
<dbReference type="SUPFAM" id="SSF82866">
    <property type="entry name" value="Multidrug efflux transporter AcrB transmembrane domain"/>
    <property type="match status" value="2"/>
</dbReference>
<feature type="chain" id="PRO_0000412713" description="Protein translocase subunit SecDF">
    <location>
        <begin position="1"/>
        <end position="735"/>
    </location>
</feature>
<feature type="transmembrane region" description="Helical; Name=1" evidence="3">
    <location>
        <begin position="1"/>
        <end position="24"/>
    </location>
</feature>
<feature type="topological domain" description="Periplasmic" evidence="3">
    <location>
        <begin position="25"/>
        <end position="268"/>
    </location>
</feature>
<feature type="transmembrane region" description="Helical; Name=2" evidence="3">
    <location>
        <begin position="269"/>
        <end position="293"/>
    </location>
</feature>
<feature type="transmembrane region" description="Helical; Name=3" evidence="3">
    <location>
        <begin position="294"/>
        <end position="315"/>
    </location>
</feature>
<feature type="topological domain" description="Periplasmic" evidence="3">
    <location>
        <begin position="316"/>
        <end position="324"/>
    </location>
</feature>
<feature type="transmembrane region" description="Helical; Name=4" evidence="3">
    <location>
        <begin position="325"/>
        <end position="347"/>
    </location>
</feature>
<feature type="topological domain" description="Cytoplasmic" evidence="3">
    <location>
        <begin position="348"/>
        <end position="360"/>
    </location>
</feature>
<feature type="transmembrane region" description="Helical; Name=5" evidence="3">
    <location>
        <begin position="361"/>
        <end position="390"/>
    </location>
</feature>
<feature type="topological domain" description="Periplasmic" evidence="3">
    <location>
        <begin position="391"/>
        <end position="396"/>
    </location>
</feature>
<feature type="transmembrane region" description="Helical; Name=6" evidence="3">
    <location>
        <begin position="397"/>
        <end position="425"/>
    </location>
</feature>
<feature type="topological domain" description="Cytoplasmic" evidence="3">
    <location>
        <begin position="426"/>
        <end position="444"/>
    </location>
</feature>
<feature type="transmembrane region" description="Helical; Name=7" evidence="3">
    <location>
        <begin position="445"/>
        <end position="468"/>
    </location>
</feature>
<feature type="topological domain" description="Periplasmic" evidence="3">
    <location>
        <begin position="469"/>
        <end position="565"/>
    </location>
</feature>
<feature type="transmembrane region" description="Helical; Name=8" evidence="3">
    <location>
        <begin position="566"/>
        <end position="589"/>
    </location>
</feature>
<feature type="transmembrane region" description="Helical; Name=9" evidence="3">
    <location>
        <begin position="590"/>
        <end position="615"/>
    </location>
</feature>
<feature type="topological domain" description="Periplasmic" evidence="3">
    <location>
        <begin position="616"/>
        <end position="620"/>
    </location>
</feature>
<feature type="transmembrane region" description="Helical; Name=10" evidence="3">
    <location>
        <begin position="621"/>
        <end position="646"/>
    </location>
</feature>
<feature type="topological domain" description="Cytoplasmic" evidence="3">
    <location>
        <begin position="647"/>
        <end position="660"/>
    </location>
</feature>
<feature type="transmembrane region" description="Helical; Name=11" evidence="3">
    <location>
        <begin position="661"/>
        <end position="688"/>
    </location>
</feature>
<feature type="topological domain" description="Periplasmic" evidence="3">
    <location>
        <begin position="689"/>
        <end position="692"/>
    </location>
</feature>
<feature type="transmembrane region" description="Helical; Name=12" evidence="3">
    <location>
        <begin position="693"/>
        <end position="723"/>
    </location>
</feature>
<feature type="topological domain" description="Cytoplasmic" evidence="3">
    <location>
        <begin position="724"/>
        <end position="735"/>
    </location>
</feature>
<feature type="region of interest" description="SecD">
    <location>
        <begin position="1"/>
        <end position="434"/>
    </location>
</feature>
<feature type="region of interest" description="Required for proton transport">
    <location>
        <begin position="112"/>
        <end position="248"/>
    </location>
</feature>
<feature type="region of interest" description="SecF">
    <location>
        <begin position="435"/>
        <end position="735"/>
    </location>
</feature>
<feature type="mutagenesis site" description="Abolishes ion channel activity." evidence="2">
    <original>D</original>
    <variation>N</variation>
    <location>
        <position position="340"/>
    </location>
</feature>
<feature type="mutagenesis site" description="No effect on ion channel activity." evidence="2">
    <original>D</original>
    <variation>N</variation>
    <location>
        <position position="637"/>
    </location>
</feature>
<feature type="mutagenesis site" description="Abolishes ion channel activity." evidence="2">
    <original>R</original>
    <variation>M</variation>
    <location>
        <position position="671"/>
    </location>
</feature>
<feature type="helix" evidence="6">
    <location>
        <begin position="4"/>
        <end position="23"/>
    </location>
</feature>
<feature type="strand" evidence="6">
    <location>
        <begin position="32"/>
        <end position="35"/>
    </location>
</feature>
<feature type="turn" evidence="6">
    <location>
        <begin position="37"/>
        <end position="40"/>
    </location>
</feature>
<feature type="strand" evidence="4">
    <location>
        <begin position="43"/>
        <end position="49"/>
    </location>
</feature>
<feature type="strand" evidence="4">
    <location>
        <begin position="51"/>
        <end position="53"/>
    </location>
</feature>
<feature type="helix" evidence="4">
    <location>
        <begin position="56"/>
        <end position="73"/>
    </location>
</feature>
<feature type="strand" evidence="4">
    <location>
        <begin position="79"/>
        <end position="83"/>
    </location>
</feature>
<feature type="turn" evidence="4">
    <location>
        <begin position="84"/>
        <end position="86"/>
    </location>
</feature>
<feature type="strand" evidence="4">
    <location>
        <begin position="87"/>
        <end position="92"/>
    </location>
</feature>
<feature type="helix" evidence="4">
    <location>
        <begin position="97"/>
        <end position="108"/>
    </location>
</feature>
<feature type="strand" evidence="4">
    <location>
        <begin position="113"/>
        <end position="118"/>
    </location>
</feature>
<feature type="helix" evidence="4">
    <location>
        <begin position="127"/>
        <end position="135"/>
    </location>
</feature>
<feature type="helix" evidence="4">
    <location>
        <begin position="142"/>
        <end position="146"/>
    </location>
</feature>
<feature type="helix" evidence="4">
    <location>
        <begin position="152"/>
        <end position="154"/>
    </location>
</feature>
<feature type="strand" evidence="4">
    <location>
        <begin position="159"/>
        <end position="161"/>
    </location>
</feature>
<feature type="helix" evidence="4">
    <location>
        <begin position="162"/>
        <end position="164"/>
    </location>
</feature>
<feature type="strand" evidence="4">
    <location>
        <begin position="165"/>
        <end position="172"/>
    </location>
</feature>
<feature type="strand" evidence="6">
    <location>
        <begin position="174"/>
        <end position="176"/>
    </location>
</feature>
<feature type="strand" evidence="4">
    <location>
        <begin position="178"/>
        <end position="184"/>
    </location>
</feature>
<feature type="helix" evidence="4">
    <location>
        <begin position="186"/>
        <end position="198"/>
    </location>
</feature>
<feature type="turn" evidence="6">
    <location>
        <begin position="199"/>
        <end position="201"/>
    </location>
</feature>
<feature type="strand" evidence="4">
    <location>
        <begin position="202"/>
        <end position="208"/>
    </location>
</feature>
<feature type="strand" evidence="4">
    <location>
        <begin position="211"/>
        <end position="214"/>
    </location>
</feature>
<feature type="strand" evidence="4">
    <location>
        <begin position="224"/>
        <end position="229"/>
    </location>
</feature>
<feature type="helix" evidence="4">
    <location>
        <begin position="235"/>
        <end position="247"/>
    </location>
</feature>
<feature type="strand" evidence="4">
    <location>
        <begin position="254"/>
        <end position="261"/>
    </location>
</feature>
<feature type="helix" evidence="6">
    <location>
        <begin position="268"/>
        <end position="319"/>
    </location>
</feature>
<feature type="helix" evidence="6">
    <location>
        <begin position="325"/>
        <end position="354"/>
    </location>
</feature>
<feature type="helix" evidence="6">
    <location>
        <begin position="359"/>
        <end position="390"/>
    </location>
</feature>
<feature type="helix" evidence="6">
    <location>
        <begin position="395"/>
        <end position="415"/>
    </location>
</feature>
<feature type="helix" evidence="6">
    <location>
        <begin position="417"/>
        <end position="427"/>
    </location>
</feature>
<feature type="turn" evidence="6">
    <location>
        <begin position="445"/>
        <end position="447"/>
    </location>
</feature>
<feature type="helix" evidence="6">
    <location>
        <begin position="448"/>
        <end position="469"/>
    </location>
</feature>
<feature type="helix" evidence="6">
    <location>
        <begin position="475"/>
        <end position="478"/>
    </location>
</feature>
<feature type="strand" evidence="6">
    <location>
        <begin position="480"/>
        <end position="487"/>
    </location>
</feature>
<feature type="helix" evidence="6">
    <location>
        <begin position="493"/>
        <end position="502"/>
    </location>
</feature>
<feature type="turn" evidence="6">
    <location>
        <begin position="507"/>
        <end position="509"/>
    </location>
</feature>
<feature type="strand" evidence="6">
    <location>
        <begin position="510"/>
        <end position="515"/>
    </location>
</feature>
<feature type="strand" evidence="6">
    <location>
        <begin position="523"/>
        <end position="529"/>
    </location>
</feature>
<feature type="helix" evidence="6">
    <location>
        <begin position="534"/>
        <end position="546"/>
    </location>
</feature>
<feature type="strand" evidence="5">
    <location>
        <begin position="548"/>
        <end position="550"/>
    </location>
</feature>
<feature type="strand" evidence="6">
    <location>
        <begin position="551"/>
        <end position="558"/>
    </location>
</feature>
<feature type="helix" evidence="6">
    <location>
        <begin position="564"/>
        <end position="588"/>
    </location>
</feature>
<feature type="helix" evidence="6">
    <location>
        <begin position="591"/>
        <end position="615"/>
    </location>
</feature>
<feature type="strand" evidence="6">
    <location>
        <begin position="618"/>
        <end position="620"/>
    </location>
</feature>
<feature type="helix" evidence="6">
    <location>
        <begin position="621"/>
        <end position="651"/>
    </location>
</feature>
<feature type="turn" evidence="6">
    <location>
        <begin position="652"/>
        <end position="654"/>
    </location>
</feature>
<feature type="helix" evidence="6">
    <location>
        <begin position="657"/>
        <end position="689"/>
    </location>
</feature>
<feature type="turn" evidence="6">
    <location>
        <begin position="692"/>
        <end position="694"/>
    </location>
</feature>
<feature type="helix" evidence="6">
    <location>
        <begin position="695"/>
        <end position="714"/>
    </location>
</feature>
<feature type="helix" evidence="6">
    <location>
        <begin position="716"/>
        <end position="734"/>
    </location>
</feature>
<comment type="function">
    <text>Conducts protons, which can be regulated by a proton gradient or by binding of an unfolded protein. Proton conduction requires the large periplasmic domain of the SecD.</text>
</comment>
<comment type="function">
    <text>Part of the Sec protein translocase complex. Interacts with the SecYEG preprotein conducting channel. SecDF uses the proton motive force (PMF) to complete protein translocation after the ATP-dependent function of SecA.</text>
</comment>
<comment type="subunit">
    <text evidence="1 2">Part of the essential Sec protein translocation apparatus which comprises SecA, SecYEG and auxiliary protein SecDF. Other proteins may also be involved (By similarity). Monomer.</text>
</comment>
<comment type="subcellular location">
    <subcellularLocation>
        <location evidence="3">Cell inner membrane</location>
        <topology evidence="3">Multi-pass membrane protein</topology>
    </subcellularLocation>
</comment>
<comment type="similarity">
    <text evidence="3">In the N-terminal section; belongs to the SecD/SecF family. SecD subfamily.</text>
</comment>
<comment type="similarity">
    <text evidence="3">In the C-terminal section; belongs to the SecD/SecF family. SecF subfamily.</text>
</comment>
<name>SECDF_THET8</name>